<reference key="1">
    <citation type="journal article" date="2000" name="J. Biol. Chem.">
        <title>Cloning, sequencing, heterologous expression, purification, and characterization of adenosylcobalamin-dependent D-lysine 5, 6-aminomutase from Clostridium sticklandii.</title>
        <authorList>
            <person name="Chang C.H."/>
            <person name="Frey P.A."/>
        </authorList>
    </citation>
    <scope>NUCLEOTIDE SEQUENCE [GENOMIC DNA]</scope>
    <scope>PROTEIN SEQUENCE OF N-TERMINUS</scope>
    <scope>FUNCTION</scope>
    <scope>CATALYTIC ACTIVITY</scope>
    <scope>COFACTOR</scope>
    <scope>ACTIVITY REGULATION</scope>
    <scope>BIOPHYSICOCHEMICAL PROPERTIES</scope>
    <scope>EPR SPECTROSCOPY</scope>
    <scope>PATHWAY</scope>
</reference>
<reference key="2">
    <citation type="journal article" date="2010" name="BMC Genomics">
        <title>Clostridium sticklandii, a specialist in amino acid degradation:revisiting its metabolism through its genome sequence.</title>
        <authorList>
            <person name="Fonknechten N."/>
            <person name="Chaussonnerie S."/>
            <person name="Tricot S."/>
            <person name="Lajus A."/>
            <person name="Andreesen J.R."/>
            <person name="Perchat N."/>
            <person name="Pelletier E."/>
            <person name="Gouyvenoux M."/>
            <person name="Barbe V."/>
            <person name="Salanoubat M."/>
            <person name="Le Paslier D."/>
            <person name="Weissenbach J."/>
            <person name="Cohen G.N."/>
            <person name="Kreimeyer A."/>
        </authorList>
    </citation>
    <scope>NUCLEOTIDE SEQUENCE [LARGE SCALE GENOMIC DNA]</scope>
    <source>
        <strain>ATCC 12662 / DSM 519 / JCM 1433 / CCUG 9281 / NCIMB 10654 / HF</strain>
    </source>
</reference>
<reference key="3">
    <citation type="journal article" date="2001" name="Biochemistry">
        <title>Electron transfer in the substrate-dependent suicide inactivation of lysine 5,6-aminomutase.</title>
        <authorList>
            <person name="Tang K.H."/>
            <person name="Chang C.H."/>
            <person name="Frey P.A."/>
        </authorList>
    </citation>
    <scope>FUNCTION</scope>
    <scope>CATALYTIC ACTIVITY</scope>
    <scope>COFACTOR</scope>
    <scope>REACTION MECHANISM</scope>
</reference>
<reference key="4">
    <citation type="journal article" date="2004" name="Proc. Natl. Acad. Sci. U.S.A.">
        <title>A locking mechanism preventing radical damage in the absence of substrate, as revealed by the x-ray structure of lysine 5,6-aminomutase.</title>
        <authorList>
            <person name="Berkovitch F."/>
            <person name="Behshad E."/>
            <person name="Tang K.H."/>
            <person name="Enns E.A."/>
            <person name="Frey P.A."/>
            <person name="Drennan C.L."/>
        </authorList>
    </citation>
    <scope>X-RAY CRYSTALLOGRAPHY (2.80 ANGSTROMS) IN COMPLEX WITH B12 AND PYRIDOXAL PHOSPHATE</scope>
    <scope>COFACTOR</scope>
    <scope>SUBUNIT</scope>
</reference>
<gene>
    <name type="primary">kamE</name>
    <name type="ordered locus">CLOST_1378</name>
</gene>
<name>KAME_ACESD</name>
<evidence type="ECO:0000255" key="1"/>
<evidence type="ECO:0000255" key="2">
    <source>
        <dbReference type="PROSITE-ProRule" id="PRU00666"/>
    </source>
</evidence>
<evidence type="ECO:0000269" key="3">
    <source>
    </source>
</evidence>
<evidence type="ECO:0000269" key="4">
    <source>
    </source>
</evidence>
<evidence type="ECO:0000269" key="5">
    <source>
    </source>
</evidence>
<evidence type="ECO:0000303" key="6">
    <source>
    </source>
</evidence>
<evidence type="ECO:0000303" key="7">
    <source>
    </source>
</evidence>
<evidence type="ECO:0000305" key="8"/>
<evidence type="ECO:0000312" key="9">
    <source>
        <dbReference type="EMBL" id="CBH21498.1"/>
    </source>
</evidence>
<evidence type="ECO:0000312" key="10">
    <source>
        <dbReference type="PDB" id="1XRS"/>
    </source>
</evidence>
<evidence type="ECO:0007829" key="11">
    <source>
        <dbReference type="PDB" id="1XRS"/>
    </source>
</evidence>
<comment type="function">
    <text evidence="3 4">Catalyzes the migration of the L-beta-lysine and D-lysine epsilon amino group to the delta carbon to produce 3,5-diaminohexanoate and 2,5-diaminohexanoate, respectively.</text>
</comment>
<comment type="catalytic activity">
    <reaction evidence="4">
        <text>(3S)-3,6-diaminohexanoate = (3S,5S)-3,5-diaminohexanoate</text>
        <dbReference type="Rhea" id="RHEA:21736"/>
        <dbReference type="ChEBI" id="CHEBI:57434"/>
        <dbReference type="ChEBI" id="CHEBI:57436"/>
        <dbReference type="EC" id="5.4.3.3"/>
    </reaction>
</comment>
<comment type="catalytic activity">
    <reaction evidence="3 4">
        <text>D-lysine = (2R,5S)-2,5-diaminohexanoate</text>
        <dbReference type="Rhea" id="RHEA:18241"/>
        <dbReference type="ChEBI" id="CHEBI:32557"/>
        <dbReference type="ChEBI" id="CHEBI:137487"/>
        <dbReference type="EC" id="5.4.3.3"/>
    </reaction>
</comment>
<comment type="cofactor">
    <cofactor evidence="3 4">
        <name>adenosylcob(III)alamin</name>
        <dbReference type="ChEBI" id="CHEBI:18408"/>
    </cofactor>
</comment>
<comment type="cofactor">
    <cofactor evidence="4 5">
        <name>pyridoxal 5'-phosphate</name>
        <dbReference type="ChEBI" id="CHEBI:597326"/>
    </cofactor>
</comment>
<comment type="activity regulation">
    <text evidence="3">Rapidly inactivated in the presence of D-lysine and to a lesser extent in the absence of adenosylcobalamin (Adocbl). Activity is stable in the presence of Adocbl when D-lysine is absent. Adocbl imparts thermal stability at 37 degrees Celsius.</text>
</comment>
<comment type="biophysicochemical properties">
    <kinetics>
        <KM evidence="3">6.6 uM for adenosylcobalamin (for recombinant alpha and beta subunits expressed together in E.coli to overcome presence of corrinoids in native system)</KM>
    </kinetics>
</comment>
<comment type="pathway">
    <text evidence="3">Amino-acid metabolism; lysine degradation.</text>
</comment>
<comment type="subunit">
    <text evidence="7">Heterotetramer of 2 alpha and 2 beta subunits.</text>
</comment>
<comment type="similarity">
    <text evidence="1">Belongs to the KamE family.</text>
</comment>
<protein>
    <recommendedName>
        <fullName evidence="8">Lysine 5,6-aminomutase beta subunit</fullName>
        <shortName evidence="6 7">5,6-LAM</shortName>
        <ecNumber evidence="3 4">5.4.3.3</ecNumber>
    </recommendedName>
    <alternativeName>
        <fullName evidence="9">D-lysine 5,6-aminomutase beta subunit</fullName>
    </alternativeName>
    <alternativeName>
        <fullName evidence="8">L-beta-lysine 5,6-aminomutase beta subunit</fullName>
    </alternativeName>
</protein>
<organism>
    <name type="scientific">Acetoanaerobium sticklandii (strain ATCC 12662 / DSM 519 / JCM 1433 / CCUG 9281 / NCIMB 10654 / HF)</name>
    <name type="common">Clostridium sticklandii</name>
    <dbReference type="NCBI Taxonomy" id="499177"/>
    <lineage>
        <taxon>Bacteria</taxon>
        <taxon>Bacillati</taxon>
        <taxon>Bacillota</taxon>
        <taxon>Clostridia</taxon>
        <taxon>Peptostreptococcales</taxon>
        <taxon>Filifactoraceae</taxon>
        <taxon>Acetoanaerobium</taxon>
    </lineage>
</organism>
<dbReference type="EC" id="5.4.3.3" evidence="3 4"/>
<dbReference type="EMBL" id="AF104259">
    <property type="protein sequence ID" value="AAC79718.1"/>
    <property type="molecule type" value="Genomic_DNA"/>
</dbReference>
<dbReference type="EMBL" id="FP565809">
    <property type="protein sequence ID" value="CBH21498.1"/>
    <property type="molecule type" value="Genomic_DNA"/>
</dbReference>
<dbReference type="PDB" id="1XRS">
    <property type="method" value="X-ray"/>
    <property type="resolution" value="2.80 A"/>
    <property type="chains" value="B=1-262"/>
</dbReference>
<dbReference type="PDBsum" id="1XRS"/>
<dbReference type="SMR" id="E3PRJ4"/>
<dbReference type="IntAct" id="E3PRJ4">
    <property type="interactions" value="1"/>
</dbReference>
<dbReference type="STRING" id="1511.CLOST_1378"/>
<dbReference type="KEGG" id="cst:CLOST_1378"/>
<dbReference type="eggNOG" id="COG2185">
    <property type="taxonomic scope" value="Bacteria"/>
</dbReference>
<dbReference type="HOGENOM" id="CLU_065773_0_0_9"/>
<dbReference type="BRENDA" id="5.4.3.3">
    <property type="organism ID" value="1522"/>
</dbReference>
<dbReference type="SABIO-RK" id="E3PRJ4"/>
<dbReference type="UniPathway" id="UPA00225"/>
<dbReference type="EvolutionaryTrace" id="E3PRJ4"/>
<dbReference type="Proteomes" id="UP000007041">
    <property type="component" value="Chromosome"/>
</dbReference>
<dbReference type="GO" id="GO:0031419">
    <property type="term" value="F:cobalamin binding"/>
    <property type="evidence" value="ECO:0007669"/>
    <property type="project" value="UniProtKB-KW"/>
</dbReference>
<dbReference type="GO" id="GO:0047826">
    <property type="term" value="F:D-lysine 5,6-aminomutase activity"/>
    <property type="evidence" value="ECO:0007669"/>
    <property type="project" value="UniProtKB-EC"/>
</dbReference>
<dbReference type="GO" id="GO:0046872">
    <property type="term" value="F:metal ion binding"/>
    <property type="evidence" value="ECO:0007669"/>
    <property type="project" value="UniProtKB-KW"/>
</dbReference>
<dbReference type="GO" id="GO:0046983">
    <property type="term" value="F:protein dimerization activity"/>
    <property type="evidence" value="ECO:0007669"/>
    <property type="project" value="InterPro"/>
</dbReference>
<dbReference type="CDD" id="cd02067">
    <property type="entry name" value="B12-binding"/>
    <property type="match status" value="1"/>
</dbReference>
<dbReference type="Gene3D" id="3.40.50.280">
    <property type="entry name" value="Cobalamin-binding domain"/>
    <property type="match status" value="1"/>
</dbReference>
<dbReference type="Gene3D" id="3.30.30.60">
    <property type="entry name" value="D-lysine 5,6-aminomutase beta subunit KamE, N-terminal domain"/>
    <property type="match status" value="1"/>
</dbReference>
<dbReference type="InterPro" id="IPR006158">
    <property type="entry name" value="Cobalamin-bd"/>
</dbReference>
<dbReference type="InterPro" id="IPR036724">
    <property type="entry name" value="Cobalamin-bd_sf"/>
</dbReference>
<dbReference type="InterPro" id="IPR028991">
    <property type="entry name" value="KamE_N"/>
</dbReference>
<dbReference type="InterPro" id="IPR036843">
    <property type="entry name" value="KamE_N_sf"/>
</dbReference>
<dbReference type="Pfam" id="PF02310">
    <property type="entry name" value="B12-binding"/>
    <property type="match status" value="1"/>
</dbReference>
<dbReference type="Pfam" id="PF16554">
    <property type="entry name" value="OAM_dimer"/>
    <property type="match status" value="1"/>
</dbReference>
<dbReference type="SUPFAM" id="SSF52242">
    <property type="entry name" value="Cobalamin (vitamin B12)-binding domain"/>
    <property type="match status" value="1"/>
</dbReference>
<dbReference type="SUPFAM" id="SSF117778">
    <property type="entry name" value="D-lysine 5,6-aminomutase beta subunit KamE, N-terminal domain"/>
    <property type="match status" value="1"/>
</dbReference>
<dbReference type="PROSITE" id="PS51332">
    <property type="entry name" value="B12_BINDING"/>
    <property type="match status" value="1"/>
</dbReference>
<feature type="chain" id="PRO_0000416984" description="Lysine 5,6-aminomutase beta subunit">
    <location>
        <begin position="1"/>
        <end position="262"/>
    </location>
</feature>
<feature type="domain" description="B12-binding" evidence="2">
    <location>
        <begin position="120"/>
        <end position="262"/>
    </location>
</feature>
<feature type="binding site" evidence="5">
    <location>
        <begin position="130"/>
        <end position="136"/>
    </location>
    <ligand>
        <name>adenosylcob(III)alamin</name>
        <dbReference type="ChEBI" id="CHEBI:18408"/>
    </ligand>
</feature>
<feature type="binding site" description="axial binding residue" evidence="10">
    <location>
        <position position="133"/>
    </location>
    <ligand>
        <name>adenosylcob(III)alamin</name>
        <dbReference type="ChEBI" id="CHEBI:18408"/>
    </ligand>
    <ligandPart>
        <name>Co</name>
        <dbReference type="ChEBI" id="CHEBI:27638"/>
    </ligandPart>
</feature>
<feature type="binding site" evidence="5">
    <location>
        <begin position="185"/>
        <end position="192"/>
    </location>
    <ligand>
        <name>adenosylcob(III)alamin</name>
        <dbReference type="ChEBI" id="CHEBI:18408"/>
    </ligand>
</feature>
<feature type="binding site" evidence="5">
    <location>
        <begin position="219"/>
        <end position="223"/>
    </location>
    <ligand>
        <name>adenosylcob(III)alamin</name>
        <dbReference type="ChEBI" id="CHEBI:18408"/>
    </ligand>
</feature>
<feature type="binding site" evidence="5">
    <location>
        <begin position="239"/>
        <end position="244"/>
    </location>
    <ligand>
        <name>adenosylcob(III)alamin</name>
        <dbReference type="ChEBI" id="CHEBI:18408"/>
    </ligand>
</feature>
<feature type="modified residue" description="N6-(pyridoxal phosphate)lysine" evidence="5">
    <location>
        <position position="144"/>
    </location>
</feature>
<feature type="strand" evidence="11">
    <location>
        <begin position="34"/>
        <end position="42"/>
    </location>
</feature>
<feature type="helix" evidence="11">
    <location>
        <begin position="46"/>
        <end position="57"/>
    </location>
</feature>
<feature type="strand" evidence="11">
    <location>
        <begin position="65"/>
        <end position="73"/>
    </location>
</feature>
<feature type="strand" evidence="11">
    <location>
        <begin position="76"/>
        <end position="83"/>
    </location>
</feature>
<feature type="helix" evidence="11">
    <location>
        <begin position="106"/>
        <end position="116"/>
    </location>
</feature>
<feature type="strand" evidence="11">
    <location>
        <begin position="121"/>
        <end position="128"/>
    </location>
</feature>
<feature type="helix" evidence="11">
    <location>
        <begin position="135"/>
        <end position="141"/>
    </location>
</feature>
<feature type="helix" evidence="11">
    <location>
        <begin position="152"/>
        <end position="154"/>
    </location>
</feature>
<feature type="strand" evidence="11">
    <location>
        <begin position="158"/>
        <end position="162"/>
    </location>
</feature>
<feature type="strand" evidence="11">
    <location>
        <begin position="165"/>
        <end position="167"/>
    </location>
</feature>
<feature type="helix" evidence="11">
    <location>
        <begin position="169"/>
        <end position="178"/>
    </location>
</feature>
<feature type="strand" evidence="11">
    <location>
        <begin position="182"/>
        <end position="187"/>
    </location>
</feature>
<feature type="helix" evidence="11">
    <location>
        <begin position="195"/>
        <end position="209"/>
    </location>
</feature>
<feature type="helix" evidence="11">
    <location>
        <begin position="213"/>
        <end position="215"/>
    </location>
</feature>
<feature type="strand" evidence="11">
    <location>
        <begin position="216"/>
        <end position="221"/>
    </location>
</feature>
<feature type="helix" evidence="11">
    <location>
        <begin position="227"/>
        <end position="231"/>
    </location>
</feature>
<feature type="turn" evidence="11">
    <location>
        <begin position="232"/>
        <end position="234"/>
    </location>
</feature>
<feature type="strand" evidence="11">
    <location>
        <begin position="236"/>
        <end position="239"/>
    </location>
</feature>
<feature type="helix" evidence="11">
    <location>
        <begin position="245"/>
        <end position="260"/>
    </location>
</feature>
<sequence>MSSGLYSMEKKEFDKVLDLERVKPYGDTMNDGKVQLSFTLPLKNNERSAEAAKQIALKMGLEEPSVVMQQSLDEEFTFFVVYGNFVQSVNYNEIHVEAVNSEILSMEETDEYIKENIGRKIVVVGASTGTDAHTVGIDAIMNMKGYAGHYGLERYEMIDAYNLGSQVANEDFIKKAVELEADVLLVSQTVTQKNVHIQNMTHLIELLEAEGLRDRFVLLCGGPRINNEIAKELGYDAGFGPGRFADDVATFAVKTLNDRMNS</sequence>
<accession>E3PRJ4</accession>
<accession>Q9ZFE5</accession>
<keyword id="KW-0002">3D-structure</keyword>
<keyword id="KW-0846">Cobalamin</keyword>
<keyword id="KW-0170">Cobalt</keyword>
<keyword id="KW-0903">Direct protein sequencing</keyword>
<keyword id="KW-0413">Isomerase</keyword>
<keyword id="KW-0479">Metal-binding</keyword>
<keyword id="KW-0663">Pyridoxal phosphate</keyword>
<keyword id="KW-1185">Reference proteome</keyword>
<proteinExistence type="evidence at protein level"/>